<reference key="1">
    <citation type="journal article" date="2004" name="Endocrinology">
        <title>Characteristics and thyroid state-dependent regulation of iodothyronine deiodinases in pigs.</title>
        <authorList>
            <person name="Wassen F.W.J.S."/>
            <person name="Klootwijk W."/>
            <person name="Kaptein E."/>
            <person name="Duncker D.J."/>
            <person name="Visser T.J."/>
            <person name="Kuiper G.G.J.M."/>
        </authorList>
    </citation>
    <scope>NUCLEOTIDE SEQUENCE [MRNA]</scope>
    <scope>FUNCTION</scope>
    <scope>TISSUE SPECIFICITY</scope>
    <scope>CATALYTIC ACTIVITY</scope>
    <scope>BIOPHYSICOCHEMICAL PROPERTIES</scope>
    <source>
        <strain>Landrace X Yorkshire</strain>
        <tissue>Pituitary</tissue>
    </source>
</reference>
<accession>Q6QN12</accession>
<comment type="function">
    <text evidence="1 4">Plays a crucial role in the metabolism of thyroid hormones (TH) and has specific roles in TH activation and inactivation by deiodination (PubMed:15192045).Catalyzes the deiodination of L-thyroxine (T4) to 3,5,3'-triiodothyronine (T3) and 3,3',5'-triiodothyronine (rT3) to 3,3'-diiodothyronine (3,3'-T2) via outer-ring deiodination (ORD) (PubMed:15192045). Catalyzes the deiodination of 3',5'-diiodothyronine (3',5'-T2) to 3'-monoiodothyronine (3'-T1) via ORD (By similarity). Catalyzes the phenolic ring deiodinations of 3,3',5'-triiodothyronamine and 3',5'- diiodothyronamine (By similarity).</text>
</comment>
<comment type="catalytic activity">
    <reaction evidence="3 4">
        <text>3,3',5-triiodo-L-thyronine + iodide + A + H(+) = L-thyroxine + AH2</text>
        <dbReference type="Rhea" id="RHEA:19745"/>
        <dbReference type="ChEBI" id="CHEBI:13193"/>
        <dbReference type="ChEBI" id="CHEBI:15378"/>
        <dbReference type="ChEBI" id="CHEBI:16382"/>
        <dbReference type="ChEBI" id="CHEBI:17499"/>
        <dbReference type="ChEBI" id="CHEBI:58448"/>
        <dbReference type="ChEBI" id="CHEBI:533015"/>
        <dbReference type="EC" id="1.21.99.4"/>
    </reaction>
    <physiologicalReaction direction="right-to-left" evidence="6">
        <dbReference type="Rhea" id="RHEA:19747"/>
    </physiologicalReaction>
</comment>
<comment type="catalytic activity">
    <reaction evidence="4">
        <text>3,3'-diiodo-L-thyronine + iodide + A + H(+) = 3,3',5'-triiodo-L-thyronine + AH2</text>
        <dbReference type="Rhea" id="RHEA:82575"/>
        <dbReference type="ChEBI" id="CHEBI:13193"/>
        <dbReference type="ChEBI" id="CHEBI:15378"/>
        <dbReference type="ChEBI" id="CHEBI:16382"/>
        <dbReference type="ChEBI" id="CHEBI:17499"/>
        <dbReference type="ChEBI" id="CHEBI:57261"/>
        <dbReference type="ChEBI" id="CHEBI:176514"/>
    </reaction>
    <physiologicalReaction direction="right-to-left" evidence="6">
        <dbReference type="Rhea" id="RHEA:82577"/>
    </physiologicalReaction>
</comment>
<comment type="catalytic activity">
    <reaction evidence="1">
        <text>3'-iodo-L-thyronine + iodide + A + H(+) = 3',5'-diiodo-L-thyronine + AH2</text>
        <dbReference type="Rhea" id="RHEA:82899"/>
        <dbReference type="ChEBI" id="CHEBI:13193"/>
        <dbReference type="ChEBI" id="CHEBI:15378"/>
        <dbReference type="ChEBI" id="CHEBI:16382"/>
        <dbReference type="ChEBI" id="CHEBI:17499"/>
        <dbReference type="ChEBI" id="CHEBI:195762"/>
        <dbReference type="ChEBI" id="CHEBI:232695"/>
    </reaction>
    <physiologicalReaction direction="right-to-left" evidence="1">
        <dbReference type="Rhea" id="RHEA:82901"/>
    </physiologicalReaction>
</comment>
<comment type="catalytic activity">
    <reaction evidence="1">
        <text>3,3'-diiodothyronamine + iodide + A + H(+) = 3,3',5'-triiodothyronamine + AH2</text>
        <dbReference type="Rhea" id="RHEA:83795"/>
        <dbReference type="ChEBI" id="CHEBI:13193"/>
        <dbReference type="ChEBI" id="CHEBI:15378"/>
        <dbReference type="ChEBI" id="CHEBI:16382"/>
        <dbReference type="ChEBI" id="CHEBI:17499"/>
        <dbReference type="ChEBI" id="CHEBI:233341"/>
        <dbReference type="ChEBI" id="CHEBI:233343"/>
    </reaction>
    <physiologicalReaction direction="right-to-left" evidence="1">
        <dbReference type="Rhea" id="RHEA:83797"/>
    </physiologicalReaction>
</comment>
<comment type="catalytic activity">
    <reaction evidence="1">
        <text>3'-iodothyronamine + iodide + A + H(+) = 3',5'-diiodothyronamine + AH2</text>
        <dbReference type="Rhea" id="RHEA:83803"/>
        <dbReference type="ChEBI" id="CHEBI:13193"/>
        <dbReference type="ChEBI" id="CHEBI:15378"/>
        <dbReference type="ChEBI" id="CHEBI:16382"/>
        <dbReference type="ChEBI" id="CHEBI:17499"/>
        <dbReference type="ChEBI" id="CHEBI:233339"/>
        <dbReference type="ChEBI" id="CHEBI:233342"/>
    </reaction>
    <physiologicalReaction direction="right-to-left" evidence="1">
        <dbReference type="Rhea" id="RHEA:83805"/>
    </physiologicalReaction>
</comment>
<comment type="biophysicochemical properties">
    <kinetics>
        <KM evidence="4">8.7 nM for L-thyroxine</KM>
    </kinetics>
</comment>
<comment type="subunit">
    <text evidence="1">Predominantly monomer. Can form homodimers but homodimerization is not essential for enzyme activity. Interacts with USP20 and USP33. Interacts with MARCHF6.</text>
</comment>
<comment type="subcellular location">
    <subcellularLocation>
        <location evidence="1">Endoplasmic reticulum membrane</location>
        <topology evidence="1">Single-pass type III membrane protein</topology>
    </subcellularLocation>
</comment>
<comment type="tissue specificity">
    <text evidence="4">More expressed in pituitary than in brain, low to undetectable levels in thyroid and skeletal muscle.</text>
</comment>
<comment type="PTM">
    <text evidence="1">Ubiquitinated by MARCHF6, leading to its degradation by the proteasome. Deubiquitinated by USP20 and USP33 (By similarity).</text>
</comment>
<comment type="similarity">
    <text evidence="5">Belongs to the iodothyronine deiodinase family.</text>
</comment>
<comment type="sequence caution" evidence="5">
    <conflict type="erroneous termination">
        <sequence resource="EMBL-CDS" id="AAS48448"/>
    </conflict>
    <text>Truncated C-terminus.</text>
</comment>
<evidence type="ECO:0000250" key="1">
    <source>
        <dbReference type="UniProtKB" id="Q92813"/>
    </source>
</evidence>
<evidence type="ECO:0000255" key="2"/>
<evidence type="ECO:0000255" key="3">
    <source>
        <dbReference type="PROSITE-ProRule" id="PRU10107"/>
    </source>
</evidence>
<evidence type="ECO:0000269" key="4">
    <source>
    </source>
</evidence>
<evidence type="ECO:0000305" key="5"/>
<evidence type="ECO:0000305" key="6">
    <source>
    </source>
</evidence>
<gene>
    <name type="primary">DIO2</name>
</gene>
<keyword id="KW-0256">Endoplasmic reticulum</keyword>
<keyword id="KW-0472">Membrane</keyword>
<keyword id="KW-0560">Oxidoreductase</keyword>
<keyword id="KW-1185">Reference proteome</keyword>
<keyword id="KW-0712">Selenocysteine</keyword>
<keyword id="KW-0893">Thyroid hormones biosynthesis</keyword>
<keyword id="KW-0812">Transmembrane</keyword>
<keyword id="KW-1133">Transmembrane helix</keyword>
<keyword id="KW-0832">Ubl conjugation</keyword>
<feature type="chain" id="PRO_0000223866" description="Type II iodothyronine deiodinase">
    <location>
        <begin position="1"/>
        <end position="269"/>
    </location>
</feature>
<feature type="topological domain" description="Lumenal" evidence="1">
    <location>
        <begin position="1"/>
        <end position="9"/>
    </location>
</feature>
<feature type="transmembrane region" description="Helical; Signal-anchor for type III membrane protein" evidence="2">
    <location>
        <begin position="10"/>
        <end position="34"/>
    </location>
</feature>
<feature type="topological domain" description="Cytoplasmic" evidence="1">
    <location>
        <begin position="35"/>
        <end position="269"/>
    </location>
</feature>
<feature type="active site" evidence="1">
    <location>
        <position position="133"/>
    </location>
</feature>
<feature type="non-standard amino acid" description="Selenocysteine" evidence="1">
    <location>
        <position position="133"/>
    </location>
</feature>
<feature type="non-standard amino acid" description="Selenocysteine" evidence="1">
    <location>
        <position position="266"/>
    </location>
</feature>
<organism>
    <name type="scientific">Sus scrofa</name>
    <name type="common">Pig</name>
    <dbReference type="NCBI Taxonomy" id="9823"/>
    <lineage>
        <taxon>Eukaryota</taxon>
        <taxon>Metazoa</taxon>
        <taxon>Chordata</taxon>
        <taxon>Craniata</taxon>
        <taxon>Vertebrata</taxon>
        <taxon>Euteleostomi</taxon>
        <taxon>Mammalia</taxon>
        <taxon>Eutheria</taxon>
        <taxon>Laurasiatheria</taxon>
        <taxon>Artiodactyla</taxon>
        <taxon>Suina</taxon>
        <taxon>Suidae</taxon>
        <taxon>Sus</taxon>
    </lineage>
</organism>
<dbReference type="EC" id="1.21.99.4" evidence="4"/>
<dbReference type="EMBL" id="AY533207">
    <property type="protein sequence ID" value="AAS48448.1"/>
    <property type="status" value="ALT_SEQ"/>
    <property type="molecule type" value="mRNA"/>
</dbReference>
<dbReference type="FunCoup" id="Q6QN12">
    <property type="interactions" value="42"/>
</dbReference>
<dbReference type="STRING" id="9823.ENSSSCP00000046993"/>
<dbReference type="PaxDb" id="9823-ENSSSCP00000025124"/>
<dbReference type="eggNOG" id="ENOG502QS2F">
    <property type="taxonomic scope" value="Eukaryota"/>
</dbReference>
<dbReference type="HOGENOM" id="CLU_1854524_0_0_1"/>
<dbReference type="InParanoid" id="Q6QN12"/>
<dbReference type="Proteomes" id="UP000008227">
    <property type="component" value="Unplaced"/>
</dbReference>
<dbReference type="Proteomes" id="UP000314985">
    <property type="component" value="Unplaced"/>
</dbReference>
<dbReference type="Proteomes" id="UP000694570">
    <property type="component" value="Unplaced"/>
</dbReference>
<dbReference type="Proteomes" id="UP000694571">
    <property type="component" value="Unplaced"/>
</dbReference>
<dbReference type="Proteomes" id="UP000694720">
    <property type="component" value="Unplaced"/>
</dbReference>
<dbReference type="Proteomes" id="UP000694722">
    <property type="component" value="Unplaced"/>
</dbReference>
<dbReference type="Proteomes" id="UP000694723">
    <property type="component" value="Unplaced"/>
</dbReference>
<dbReference type="Proteomes" id="UP000694724">
    <property type="component" value="Unplaced"/>
</dbReference>
<dbReference type="Proteomes" id="UP000694725">
    <property type="component" value="Unplaced"/>
</dbReference>
<dbReference type="Proteomes" id="UP000694726">
    <property type="component" value="Unplaced"/>
</dbReference>
<dbReference type="Proteomes" id="UP000694727">
    <property type="component" value="Unplaced"/>
</dbReference>
<dbReference type="Proteomes" id="UP000694728">
    <property type="component" value="Unplaced"/>
</dbReference>
<dbReference type="GO" id="GO:0005789">
    <property type="term" value="C:endoplasmic reticulum membrane"/>
    <property type="evidence" value="ECO:0000250"/>
    <property type="project" value="UniProtKB"/>
</dbReference>
<dbReference type="GO" id="GO:0004800">
    <property type="term" value="F:thyroxine 5'-deiodinase activity"/>
    <property type="evidence" value="ECO:0000314"/>
    <property type="project" value="UniProtKB"/>
</dbReference>
<dbReference type="GO" id="GO:0042446">
    <property type="term" value="P:hormone biosynthetic process"/>
    <property type="evidence" value="ECO:0007669"/>
    <property type="project" value="UniProtKB-KW"/>
</dbReference>
<dbReference type="GO" id="GO:0042404">
    <property type="term" value="P:thyroid hormone catabolic process"/>
    <property type="evidence" value="ECO:0000314"/>
    <property type="project" value="UniProtKB"/>
</dbReference>
<dbReference type="GO" id="GO:0042403">
    <property type="term" value="P:thyroid hormone metabolic process"/>
    <property type="evidence" value="ECO:0000250"/>
    <property type="project" value="UniProtKB"/>
</dbReference>
<dbReference type="FunFam" id="3.40.30.10:FF:000194">
    <property type="entry name" value="Iodothyronine deiodinase"/>
    <property type="match status" value="1"/>
</dbReference>
<dbReference type="Gene3D" id="3.40.30.10">
    <property type="entry name" value="Glutaredoxin"/>
    <property type="match status" value="1"/>
</dbReference>
<dbReference type="InterPro" id="IPR000643">
    <property type="entry name" value="Iodothyronine_deiodinase"/>
</dbReference>
<dbReference type="InterPro" id="IPR008261">
    <property type="entry name" value="Iodothyronine_deiodinase_AS"/>
</dbReference>
<dbReference type="InterPro" id="IPR036249">
    <property type="entry name" value="Thioredoxin-like_sf"/>
</dbReference>
<dbReference type="PANTHER" id="PTHR11781">
    <property type="entry name" value="IODOTHYRONINE DEIODINASE"/>
    <property type="match status" value="1"/>
</dbReference>
<dbReference type="PANTHER" id="PTHR11781:SF20">
    <property type="entry name" value="TYPE II IODOTHYRONINE DEIODINASE"/>
    <property type="match status" value="1"/>
</dbReference>
<dbReference type="Pfam" id="PF00837">
    <property type="entry name" value="T4_deiodinase"/>
    <property type="match status" value="1"/>
</dbReference>
<dbReference type="PIRSF" id="PIRSF001330">
    <property type="entry name" value="IOD"/>
    <property type="match status" value="1"/>
</dbReference>
<dbReference type="SUPFAM" id="SSF52833">
    <property type="entry name" value="Thioredoxin-like"/>
    <property type="match status" value="1"/>
</dbReference>
<dbReference type="PROSITE" id="PS01205">
    <property type="entry name" value="T4_DEIODINASE"/>
    <property type="match status" value="1"/>
</dbReference>
<name>IOD2_PIG</name>
<protein>
    <recommendedName>
        <fullName>Type II iodothyronine deiodinase</fullName>
        <ecNumber evidence="4">1.21.99.4</ecNumber>
    </recommendedName>
    <alternativeName>
        <fullName>5DII</fullName>
    </alternativeName>
    <alternativeName>
        <fullName>DIOII</fullName>
    </alternativeName>
    <alternativeName>
        <fullName>Type 2 DI</fullName>
    </alternativeName>
    <alternativeName>
        <fullName>Type-II 5'-deiodinase</fullName>
    </alternativeName>
</protein>
<sequence length="269" mass="30376">MGILSVDLLITLQILPVFFSNCLFLALYDSVILLKHVVLLLSRSKSTRGEWRRMLTSEGMRCIWKSFLLDAYKQVKLGEDAPNSSVVHVSNPEGSNNHGHGTQEKTVDGAECHLLDFANPERPLVVNFGSATUPPFTSQLPAFSKLVEEFSSVADFLLVYIDEAHPSDGWAVPGDSSLSFEVKKHQNQEDRCAAAHQLLERFSLPPQCRVVADRMDNNANVAYGVAFERVCIVQRQKIAYLGGKGPFYYNLQEVRRWLEKNFSKRUKKT</sequence>
<proteinExistence type="evidence at protein level"/>